<feature type="chain" id="PRO_0000376554" description="Probable cell division protein WhiA">
    <location>
        <begin position="1"/>
        <end position="314"/>
    </location>
</feature>
<feature type="DNA-binding region" description="H-T-H motif" evidence="1">
    <location>
        <begin position="274"/>
        <end position="308"/>
    </location>
</feature>
<sequence length="314" mass="35868">MSFASEMKNELTRIDVDEMNAKAELSALIRMNGALSLSNQQFVINVQTENATTARRIYSLIKRVFNVEVEILVRKKMKLKKNNIYICRTKMKAKEILDELGILKDGIFTHEIDHSMIQDDEMRRSYLRGAFLAGGSVNNPETSSYHLEIFSQNESHAEGLTKLMNSYELNAKHLERKKGSITYLKEAEKISDFLSLIGGYQALLKFEDVRIVRDMRNSVNRLVNCETANLNKTVSAAMKQVESIKLIDKEIGIENLPDRLREIARIRVEHQEISLKELGEMVSTGPISKSGVNHRLRKLNDLADKIRNGEQIEL</sequence>
<evidence type="ECO:0000255" key="1">
    <source>
        <dbReference type="HAMAP-Rule" id="MF_01420"/>
    </source>
</evidence>
<reference key="1">
    <citation type="submission" date="2007-05" db="EMBL/GenBank/DDBJ databases">
        <title>Complete sequence of chromosome of Staphylococcus aureus subsp. aureus JH9.</title>
        <authorList>
            <consortium name="US DOE Joint Genome Institute"/>
            <person name="Copeland A."/>
            <person name="Lucas S."/>
            <person name="Lapidus A."/>
            <person name="Barry K."/>
            <person name="Detter J.C."/>
            <person name="Glavina del Rio T."/>
            <person name="Hammon N."/>
            <person name="Israni S."/>
            <person name="Pitluck S."/>
            <person name="Chain P."/>
            <person name="Malfatti S."/>
            <person name="Shin M."/>
            <person name="Vergez L."/>
            <person name="Schmutz J."/>
            <person name="Larimer F."/>
            <person name="Land M."/>
            <person name="Hauser L."/>
            <person name="Kyrpides N."/>
            <person name="Kim E."/>
            <person name="Tomasz A."/>
            <person name="Richardson P."/>
        </authorList>
    </citation>
    <scope>NUCLEOTIDE SEQUENCE [LARGE SCALE GENOMIC DNA]</scope>
    <source>
        <strain>JH9</strain>
    </source>
</reference>
<protein>
    <recommendedName>
        <fullName evidence="1">Probable cell division protein WhiA</fullName>
    </recommendedName>
</protein>
<gene>
    <name evidence="1" type="primary">whiA</name>
    <name type="ordered locus">SaurJH9_0792</name>
</gene>
<comment type="function">
    <text evidence="1">Involved in cell division and chromosome segregation.</text>
</comment>
<comment type="similarity">
    <text evidence="1">Belongs to the WhiA family.</text>
</comment>
<proteinExistence type="inferred from homology"/>
<dbReference type="EMBL" id="CP000703">
    <property type="protein sequence ID" value="ABQ48594.1"/>
    <property type="molecule type" value="Genomic_DNA"/>
</dbReference>
<dbReference type="RefSeq" id="WP_000006551.1">
    <property type="nucleotide sequence ID" value="NC_009487.1"/>
</dbReference>
<dbReference type="SMR" id="A5IQX1"/>
<dbReference type="KEGG" id="saj:SaurJH9_0792"/>
<dbReference type="HOGENOM" id="CLU_053282_0_0_9"/>
<dbReference type="GO" id="GO:0003677">
    <property type="term" value="F:DNA binding"/>
    <property type="evidence" value="ECO:0007669"/>
    <property type="project" value="UniProtKB-UniRule"/>
</dbReference>
<dbReference type="GO" id="GO:0051301">
    <property type="term" value="P:cell division"/>
    <property type="evidence" value="ECO:0007669"/>
    <property type="project" value="UniProtKB-UniRule"/>
</dbReference>
<dbReference type="GO" id="GO:0043937">
    <property type="term" value="P:regulation of sporulation"/>
    <property type="evidence" value="ECO:0007669"/>
    <property type="project" value="InterPro"/>
</dbReference>
<dbReference type="FunFam" id="3.10.28.10:FF:000002">
    <property type="entry name" value="Probable cell division protein WhiA"/>
    <property type="match status" value="1"/>
</dbReference>
<dbReference type="Gene3D" id="3.10.28.10">
    <property type="entry name" value="Homing endonucleases"/>
    <property type="match status" value="1"/>
</dbReference>
<dbReference type="HAMAP" id="MF_01420">
    <property type="entry name" value="HTH_type_WhiA"/>
    <property type="match status" value="1"/>
</dbReference>
<dbReference type="InterPro" id="IPR027434">
    <property type="entry name" value="Homing_endonucl"/>
</dbReference>
<dbReference type="InterPro" id="IPR018478">
    <property type="entry name" value="Sporu_reg_WhiA_N_dom"/>
</dbReference>
<dbReference type="InterPro" id="IPR003802">
    <property type="entry name" value="Sporulation_regulator_WhiA"/>
</dbReference>
<dbReference type="InterPro" id="IPR023054">
    <property type="entry name" value="Sporulation_regulator_WhiA_C"/>
</dbReference>
<dbReference type="InterPro" id="IPR039518">
    <property type="entry name" value="WhiA_LAGLIDADG_dom"/>
</dbReference>
<dbReference type="NCBIfam" id="TIGR00647">
    <property type="entry name" value="DNA_bind_WhiA"/>
    <property type="match status" value="1"/>
</dbReference>
<dbReference type="PANTHER" id="PTHR37307">
    <property type="entry name" value="CELL DIVISION PROTEIN WHIA-RELATED"/>
    <property type="match status" value="1"/>
</dbReference>
<dbReference type="PANTHER" id="PTHR37307:SF1">
    <property type="entry name" value="CELL DIVISION PROTEIN WHIA-RELATED"/>
    <property type="match status" value="1"/>
</dbReference>
<dbReference type="Pfam" id="PF02650">
    <property type="entry name" value="HTH_WhiA"/>
    <property type="match status" value="1"/>
</dbReference>
<dbReference type="Pfam" id="PF14527">
    <property type="entry name" value="LAGLIDADG_WhiA"/>
    <property type="match status" value="1"/>
</dbReference>
<dbReference type="Pfam" id="PF10298">
    <property type="entry name" value="WhiA_N"/>
    <property type="match status" value="1"/>
</dbReference>
<dbReference type="SUPFAM" id="SSF55608">
    <property type="entry name" value="Homing endonucleases"/>
    <property type="match status" value="1"/>
</dbReference>
<keyword id="KW-0131">Cell cycle</keyword>
<keyword id="KW-0132">Cell division</keyword>
<keyword id="KW-0238">DNA-binding</keyword>
<name>WHIA_STAA9</name>
<accession>A5IQX1</accession>
<organism>
    <name type="scientific">Staphylococcus aureus (strain JH9)</name>
    <dbReference type="NCBI Taxonomy" id="359786"/>
    <lineage>
        <taxon>Bacteria</taxon>
        <taxon>Bacillati</taxon>
        <taxon>Bacillota</taxon>
        <taxon>Bacilli</taxon>
        <taxon>Bacillales</taxon>
        <taxon>Staphylococcaceae</taxon>
        <taxon>Staphylococcus</taxon>
    </lineage>
</organism>